<comment type="function">
    <text evidence="1">Suppresses cannabinoid receptor CNR1-mediated tonic inhibition of voltage-gated calcium channels.</text>
</comment>
<comment type="subunit">
    <text evidence="2">Interacts with the cannabinoid receptor CNR1 (via C-terminus). Does not interact with cannabinoid receptor CNR2.</text>
</comment>
<comment type="similarity">
    <text evidence="3">Belongs to the CNRIP family.</text>
</comment>
<protein>
    <recommendedName>
        <fullName>CB1 cannabinoid receptor-interacting protein 1</fullName>
        <shortName>CRIP-1</shortName>
    </recommendedName>
</protein>
<proteinExistence type="evidence at protein level"/>
<feature type="chain" id="PRO_0000089363" description="CB1 cannabinoid receptor-interacting protein 1">
    <location>
        <begin position="1"/>
        <end position="164"/>
    </location>
</feature>
<feature type="strand" evidence="4">
    <location>
        <begin position="8"/>
        <end position="16"/>
    </location>
</feature>
<feature type="turn" evidence="4">
    <location>
        <begin position="17"/>
        <end position="20"/>
    </location>
</feature>
<feature type="strand" evidence="4">
    <location>
        <begin position="37"/>
        <end position="43"/>
    </location>
</feature>
<feature type="strand" evidence="4">
    <location>
        <begin position="45"/>
        <end position="54"/>
    </location>
</feature>
<feature type="strand" evidence="4">
    <location>
        <begin position="61"/>
        <end position="64"/>
    </location>
</feature>
<feature type="strand" evidence="4">
    <location>
        <begin position="67"/>
        <end position="70"/>
    </location>
</feature>
<feature type="strand" evidence="4">
    <location>
        <begin position="72"/>
        <end position="74"/>
    </location>
</feature>
<feature type="strand" evidence="4">
    <location>
        <begin position="83"/>
        <end position="90"/>
    </location>
</feature>
<feature type="strand" evidence="4">
    <location>
        <begin position="103"/>
        <end position="114"/>
    </location>
</feature>
<feature type="strand" evidence="4">
    <location>
        <begin position="116"/>
        <end position="126"/>
    </location>
</feature>
<feature type="helix" evidence="4">
    <location>
        <begin position="131"/>
        <end position="134"/>
    </location>
</feature>
<feature type="strand" evidence="4">
    <location>
        <begin position="135"/>
        <end position="139"/>
    </location>
</feature>
<feature type="strand" evidence="4">
    <location>
        <begin position="141"/>
        <end position="148"/>
    </location>
</feature>
<feature type="strand" evidence="4">
    <location>
        <begin position="150"/>
        <end position="152"/>
    </location>
</feature>
<feature type="strand" evidence="4">
    <location>
        <begin position="157"/>
        <end position="164"/>
    </location>
</feature>
<gene>
    <name type="primary">Cnrip1</name>
</gene>
<sequence length="164" mass="18658">MGDLPGIVRLSIALRIQPNDGPVFFKVDGQRFGQNRTIKLLTGSSYKVEVKIKPTTLQVENISIGGVLVPLELKCKEPDGERVVYTGIYDTEGVAPTKSGERQPIQITMPFTDIGTFETVWQVKFYNYHKRDHCQWGSPFSVIEYECKPNETRSLMWVNKESFL</sequence>
<dbReference type="EMBL" id="AY883936">
    <property type="protein sequence ID" value="AAX68416.1"/>
    <property type="molecule type" value="mRNA"/>
</dbReference>
<dbReference type="EMBL" id="BC088754">
    <property type="protein sequence ID" value="AAH88754.1"/>
    <property type="molecule type" value="mRNA"/>
</dbReference>
<dbReference type="RefSeq" id="NP_001014254.1">
    <property type="nucleotide sequence ID" value="NM_001014232.2"/>
</dbReference>
<dbReference type="PDB" id="6WSK">
    <property type="method" value="X-ray"/>
    <property type="resolution" value="1.55 A"/>
    <property type="chains" value="A=1-164"/>
</dbReference>
<dbReference type="PDB" id="7Q2T">
    <property type="method" value="X-ray"/>
    <property type="resolution" value="1.65 A"/>
    <property type="chains" value="XXX=1-164"/>
</dbReference>
<dbReference type="PDBsum" id="6WSK"/>
<dbReference type="PDBsum" id="7Q2T"/>
<dbReference type="SMR" id="Q5M7A7"/>
<dbReference type="BioGRID" id="264650">
    <property type="interactions" value="2"/>
</dbReference>
<dbReference type="FunCoup" id="Q5M7A7">
    <property type="interactions" value="1231"/>
</dbReference>
<dbReference type="IntAct" id="Q5M7A7">
    <property type="interactions" value="1"/>
</dbReference>
<dbReference type="MINT" id="Q5M7A7"/>
<dbReference type="STRING" id="10116.ENSRNOP00000007104"/>
<dbReference type="GlyGen" id="Q5M7A7">
    <property type="glycosylation" value="1 site"/>
</dbReference>
<dbReference type="iPTMnet" id="Q5M7A7"/>
<dbReference type="PhosphoSitePlus" id="Q5M7A7"/>
<dbReference type="SwissPalm" id="Q5M7A7"/>
<dbReference type="PaxDb" id="10116-ENSRNOP00000007104"/>
<dbReference type="Ensembl" id="ENSRNOT00000007104.7">
    <property type="protein sequence ID" value="ENSRNOP00000007104.4"/>
    <property type="gene ID" value="ENSRNOG00000005326.7"/>
</dbReference>
<dbReference type="GeneID" id="364208"/>
<dbReference type="KEGG" id="rno:364208"/>
<dbReference type="UCSC" id="RGD:1308373">
    <property type="organism name" value="rat"/>
</dbReference>
<dbReference type="AGR" id="RGD:1308373"/>
<dbReference type="CTD" id="25927"/>
<dbReference type="RGD" id="1308373">
    <property type="gene designation" value="Cnrip1"/>
</dbReference>
<dbReference type="eggNOG" id="ENOG502QTXE">
    <property type="taxonomic scope" value="Eukaryota"/>
</dbReference>
<dbReference type="GeneTree" id="ENSGT00390000004284"/>
<dbReference type="HOGENOM" id="CLU_110298_0_0_1"/>
<dbReference type="InParanoid" id="Q5M7A7"/>
<dbReference type="OMA" id="MEFNKAG"/>
<dbReference type="OrthoDB" id="995at9989"/>
<dbReference type="PRO" id="PR:Q5M7A7"/>
<dbReference type="Proteomes" id="UP000002494">
    <property type="component" value="Chromosome 14"/>
</dbReference>
<dbReference type="Bgee" id="ENSRNOG00000005326">
    <property type="expression patterns" value="Expressed in frontal cortex and 20 other cell types or tissues"/>
</dbReference>
<dbReference type="ExpressionAtlas" id="Q5M7A7">
    <property type="expression patterns" value="baseline and differential"/>
</dbReference>
<dbReference type="GO" id="GO:0005737">
    <property type="term" value="C:cytoplasm"/>
    <property type="evidence" value="ECO:0000266"/>
    <property type="project" value="RGD"/>
</dbReference>
<dbReference type="GO" id="GO:0098982">
    <property type="term" value="C:GABA-ergic synapse"/>
    <property type="evidence" value="ECO:0000266"/>
    <property type="project" value="RGD"/>
</dbReference>
<dbReference type="GO" id="GO:0098978">
    <property type="term" value="C:glutamatergic synapse"/>
    <property type="evidence" value="ECO:0000266"/>
    <property type="project" value="RGD"/>
</dbReference>
<dbReference type="GO" id="GO:0005886">
    <property type="term" value="C:plasma membrane"/>
    <property type="evidence" value="ECO:0000266"/>
    <property type="project" value="RGD"/>
</dbReference>
<dbReference type="GO" id="GO:0098793">
    <property type="term" value="C:presynapse"/>
    <property type="evidence" value="ECO:0000266"/>
    <property type="project" value="RGD"/>
</dbReference>
<dbReference type="GO" id="GO:0031718">
    <property type="term" value="F:type 1 cannabinoid receptor binding"/>
    <property type="evidence" value="ECO:0000353"/>
    <property type="project" value="UniProtKB"/>
</dbReference>
<dbReference type="GO" id="GO:0150036">
    <property type="term" value="P:regulation of trans-synaptic signaling by endocannabinoid, modulating synaptic transmission"/>
    <property type="evidence" value="ECO:0000266"/>
    <property type="project" value="RGD"/>
</dbReference>
<dbReference type="InterPro" id="IPR029204">
    <property type="entry name" value="CNRIP1"/>
</dbReference>
<dbReference type="PANTHER" id="PTHR31952">
    <property type="entry name" value="CB1 CANNABINOID RECEPTOR-INTERACTING PROTEIN 1"/>
    <property type="match status" value="1"/>
</dbReference>
<dbReference type="PANTHER" id="PTHR31952:SF1">
    <property type="entry name" value="CB1 CANNABINOID RECEPTOR-INTERACTING PROTEIN 1"/>
    <property type="match status" value="1"/>
</dbReference>
<dbReference type="Pfam" id="PF15043">
    <property type="entry name" value="CNRIP1"/>
    <property type="match status" value="1"/>
</dbReference>
<organism>
    <name type="scientific">Rattus norvegicus</name>
    <name type="common">Rat</name>
    <dbReference type="NCBI Taxonomy" id="10116"/>
    <lineage>
        <taxon>Eukaryota</taxon>
        <taxon>Metazoa</taxon>
        <taxon>Chordata</taxon>
        <taxon>Craniata</taxon>
        <taxon>Vertebrata</taxon>
        <taxon>Euteleostomi</taxon>
        <taxon>Mammalia</taxon>
        <taxon>Eutheria</taxon>
        <taxon>Euarchontoglires</taxon>
        <taxon>Glires</taxon>
        <taxon>Rodentia</taxon>
        <taxon>Myomorpha</taxon>
        <taxon>Muroidea</taxon>
        <taxon>Muridae</taxon>
        <taxon>Murinae</taxon>
        <taxon>Rattus</taxon>
    </lineage>
</organism>
<name>CNRP1_RAT</name>
<evidence type="ECO:0000250" key="1"/>
<evidence type="ECO:0000269" key="2">
    <source>
    </source>
</evidence>
<evidence type="ECO:0000305" key="3"/>
<evidence type="ECO:0007829" key="4">
    <source>
        <dbReference type="PDB" id="6WSK"/>
    </source>
</evidence>
<reference key="1">
    <citation type="journal article" date="2007" name="Mol. Pharmacol.">
        <title>CB1 cannabinoid receptor activity is modulated by the cannabinoid receptor interacting protein CRIP 1a.</title>
        <authorList>
            <person name="Niehaus J.L."/>
            <person name="Liu Y."/>
            <person name="Wallis K.T."/>
            <person name="Egertova M."/>
            <person name="Bhartur S.G."/>
            <person name="Mukhopadhyay S."/>
            <person name="Shi S."/>
            <person name="He H."/>
            <person name="Selley D.E."/>
            <person name="Howlett A.C."/>
            <person name="Elphick M.R."/>
            <person name="Lewis D.L."/>
        </authorList>
    </citation>
    <scope>NUCLEOTIDE SEQUENCE [MRNA]</scope>
    <scope>INTERACTION WITH CNR1</scope>
    <source>
        <strain>Sprague-Dawley</strain>
        <tissue>Brain</tissue>
    </source>
</reference>
<reference key="2">
    <citation type="journal article" date="2004" name="Genome Res.">
        <title>The status, quality, and expansion of the NIH full-length cDNA project: the Mammalian Gene Collection (MGC).</title>
        <authorList>
            <consortium name="The MGC Project Team"/>
        </authorList>
    </citation>
    <scope>NUCLEOTIDE SEQUENCE [LARGE SCALE MRNA]</scope>
    <source>
        <tissue>Brain</tissue>
    </source>
</reference>
<reference key="3">
    <citation type="submission" date="2007-07" db="UniProtKB">
        <authorList>
            <person name="Lubec G."/>
            <person name="Chen W.-Q."/>
            <person name="Kang S.U."/>
        </authorList>
    </citation>
    <scope>PROTEIN SEQUENCE OF 16-26; 52-74 AND 83-98</scope>
    <scope>IDENTIFICATION BY MASS SPECTROMETRY</scope>
    <source>
        <strain>Sprague-Dawley</strain>
        <tissue>Brain</tissue>
        <tissue>Hippocampus</tissue>
    </source>
</reference>
<accession>Q5M7A7</accession>
<accession>A2RQR5</accession>
<keyword id="KW-0002">3D-structure</keyword>
<keyword id="KW-0903">Direct protein sequencing</keyword>
<keyword id="KW-1185">Reference proteome</keyword>